<feature type="chain" id="PRO_0000415517" description="Thiamine-monophosphate kinase">
    <location>
        <begin position="1"/>
        <end position="306"/>
    </location>
</feature>
<feature type="binding site" evidence="2">
    <location>
        <position position="27"/>
    </location>
    <ligand>
        <name>Mg(2+)</name>
        <dbReference type="ChEBI" id="CHEBI:18420"/>
        <label>3</label>
    </ligand>
</feature>
<feature type="binding site" evidence="2">
    <location>
        <position position="27"/>
    </location>
    <ligand>
        <name>Mg(2+)</name>
        <dbReference type="ChEBI" id="CHEBI:18420"/>
        <label>4</label>
    </ligand>
</feature>
<feature type="binding site" evidence="2">
    <location>
        <position position="41"/>
    </location>
    <ligand>
        <name>Mg(2+)</name>
        <dbReference type="ChEBI" id="CHEBI:18420"/>
        <label>4</label>
    </ligand>
</feature>
<feature type="binding site" evidence="2">
    <location>
        <position position="42"/>
    </location>
    <ligand>
        <name>Mg(2+)</name>
        <dbReference type="ChEBI" id="CHEBI:18420"/>
        <label>1</label>
    </ligand>
</feature>
<feature type="binding site" evidence="2">
    <location>
        <position position="43"/>
    </location>
    <ligand>
        <name>Mg(2+)</name>
        <dbReference type="ChEBI" id="CHEBI:18420"/>
        <label>1</label>
    </ligand>
</feature>
<feature type="binding site" evidence="2">
    <location>
        <position position="43"/>
    </location>
    <ligand>
        <name>Mg(2+)</name>
        <dbReference type="ChEBI" id="CHEBI:18420"/>
        <label>2</label>
    </ligand>
</feature>
<feature type="binding site" evidence="2">
    <location>
        <position position="50"/>
    </location>
    <ligand>
        <name>substrate</name>
    </ligand>
</feature>
<feature type="binding site" evidence="2">
    <location>
        <position position="71"/>
    </location>
    <ligand>
        <name>Mg(2+)</name>
        <dbReference type="ChEBI" id="CHEBI:18420"/>
        <label>2</label>
    </ligand>
</feature>
<feature type="binding site" evidence="2">
    <location>
        <position position="71"/>
    </location>
    <ligand>
        <name>Mg(2+)</name>
        <dbReference type="ChEBI" id="CHEBI:18420"/>
        <label>3</label>
    </ligand>
</feature>
<feature type="binding site" evidence="2">
    <location>
        <position position="71"/>
    </location>
    <ligand>
        <name>Mg(2+)</name>
        <dbReference type="ChEBI" id="CHEBI:18420"/>
        <label>4</label>
    </ligand>
</feature>
<feature type="binding site" evidence="2">
    <location>
        <position position="101"/>
    </location>
    <ligand>
        <name>ATP</name>
        <dbReference type="ChEBI" id="CHEBI:30616"/>
    </ligand>
</feature>
<feature type="binding site" evidence="2">
    <location>
        <begin position="118"/>
        <end position="119"/>
    </location>
    <ligand>
        <name>ATP</name>
        <dbReference type="ChEBI" id="CHEBI:30616"/>
    </ligand>
</feature>
<feature type="binding site" evidence="2">
    <location>
        <position position="119"/>
    </location>
    <ligand>
        <name>Mg(2+)</name>
        <dbReference type="ChEBI" id="CHEBI:18420"/>
        <label>1</label>
    </ligand>
</feature>
<feature type="binding site" evidence="2">
    <location>
        <position position="142"/>
    </location>
    <ligand>
        <name>ATP</name>
        <dbReference type="ChEBI" id="CHEBI:30616"/>
    </ligand>
</feature>
<feature type="binding site" evidence="2">
    <location>
        <position position="207"/>
    </location>
    <ligand>
        <name>Mg(2+)</name>
        <dbReference type="ChEBI" id="CHEBI:18420"/>
        <label>3</label>
    </ligand>
</feature>
<feature type="binding site" evidence="2">
    <location>
        <position position="209"/>
    </location>
    <ligand>
        <name>ATP</name>
        <dbReference type="ChEBI" id="CHEBI:30616"/>
    </ligand>
</feature>
<feature type="binding site" evidence="2">
    <location>
        <position position="210"/>
    </location>
    <ligand>
        <name>Mg(2+)</name>
        <dbReference type="ChEBI" id="CHEBI:18420"/>
        <label>5</label>
    </ligand>
</feature>
<feature type="binding site" evidence="2">
    <location>
        <position position="260"/>
    </location>
    <ligand>
        <name>substrate</name>
    </ligand>
</feature>
<feature type="binding site" evidence="2">
    <location>
        <position position="303"/>
    </location>
    <ligand>
        <name>substrate</name>
    </ligand>
</feature>
<feature type="disulfide bond" description="Interchain" evidence="2">
    <location>
        <position position="34"/>
    </location>
</feature>
<feature type="helix" evidence="5">
    <location>
        <begin position="3"/>
        <end position="6"/>
    </location>
</feature>
<feature type="helix" evidence="5">
    <location>
        <begin position="8"/>
        <end position="19"/>
    </location>
</feature>
<feature type="strand" evidence="5">
    <location>
        <begin position="26"/>
        <end position="33"/>
    </location>
</feature>
<feature type="strand" evidence="5">
    <location>
        <begin position="36"/>
        <end position="46"/>
    </location>
</feature>
<feature type="turn" evidence="5">
    <location>
        <begin position="47"/>
        <end position="49"/>
    </location>
</feature>
<feature type="helix" evidence="5">
    <location>
        <begin position="57"/>
        <end position="74"/>
    </location>
</feature>
<feature type="strand" evidence="5">
    <location>
        <begin position="78"/>
        <end position="88"/>
    </location>
</feature>
<feature type="helix" evidence="5">
    <location>
        <begin position="94"/>
        <end position="111"/>
    </location>
</feature>
<feature type="strand" evidence="5">
    <location>
        <begin position="114"/>
        <end position="122"/>
    </location>
</feature>
<feature type="strand" evidence="5">
    <location>
        <begin position="127"/>
        <end position="138"/>
    </location>
</feature>
<feature type="strand" evidence="5">
    <location>
        <begin position="150"/>
        <end position="155"/>
    </location>
</feature>
<feature type="helix" evidence="5">
    <location>
        <begin position="159"/>
        <end position="168"/>
    </location>
</feature>
<feature type="helix" evidence="5">
    <location>
        <begin position="176"/>
        <end position="186"/>
    </location>
</feature>
<feature type="helix" evidence="5">
    <location>
        <begin position="192"/>
        <end position="194"/>
    </location>
</feature>
<feature type="helix" evidence="5">
    <location>
        <begin position="195"/>
        <end position="201"/>
    </location>
</feature>
<feature type="strand" evidence="5">
    <location>
        <begin position="203"/>
        <end position="210"/>
    </location>
</feature>
<feature type="helix" evidence="5">
    <location>
        <begin position="212"/>
        <end position="223"/>
    </location>
</feature>
<feature type="strand" evidence="5">
    <location>
        <begin position="226"/>
        <end position="229"/>
    </location>
</feature>
<feature type="helix" evidence="5">
    <location>
        <begin position="231"/>
        <end position="233"/>
    </location>
</feature>
<feature type="helix" evidence="5">
    <location>
        <begin position="238"/>
        <end position="246"/>
    </location>
</feature>
<feature type="helix" evidence="5">
    <location>
        <begin position="251"/>
        <end position="257"/>
    </location>
</feature>
<feature type="strand" evidence="5">
    <location>
        <begin position="263"/>
        <end position="268"/>
    </location>
</feature>
<feature type="helix" evidence="5">
    <location>
        <begin position="270"/>
        <end position="272"/>
    </location>
</feature>
<feature type="turn" evidence="4">
    <location>
        <begin position="275"/>
        <end position="278"/>
    </location>
</feature>
<feature type="strand" evidence="5">
    <location>
        <begin position="279"/>
        <end position="293"/>
    </location>
</feature>
<accession>O67883</accession>
<keyword id="KW-0002">3D-structure</keyword>
<keyword id="KW-0067">ATP-binding</keyword>
<keyword id="KW-1015">Disulfide bond</keyword>
<keyword id="KW-0418">Kinase</keyword>
<keyword id="KW-0460">Magnesium</keyword>
<keyword id="KW-0479">Metal-binding</keyword>
<keyword id="KW-0547">Nucleotide-binding</keyword>
<keyword id="KW-1185">Reference proteome</keyword>
<keyword id="KW-0784">Thiamine biosynthesis</keyword>
<keyword id="KW-0808">Transferase</keyword>
<reference key="1">
    <citation type="journal article" date="1998" name="Nature">
        <title>The complete genome of the hyperthermophilic bacterium Aquifex aeolicus.</title>
        <authorList>
            <person name="Deckert G."/>
            <person name="Warren P.V."/>
            <person name="Gaasterland T."/>
            <person name="Young W.G."/>
            <person name="Lenox A.L."/>
            <person name="Graham D.E."/>
            <person name="Overbeek R."/>
            <person name="Snead M.A."/>
            <person name="Keller M."/>
            <person name="Aujay M."/>
            <person name="Huber R."/>
            <person name="Feldman R.A."/>
            <person name="Short J.M."/>
            <person name="Olsen G.J."/>
            <person name="Swanson R.V."/>
        </authorList>
    </citation>
    <scope>NUCLEOTIDE SEQUENCE [LARGE SCALE GENOMIC DNA]</scope>
    <source>
        <strain>VF5</strain>
    </source>
</reference>
<reference key="2">
    <citation type="journal article" date="2008" name="Biochemistry">
        <title>Structural studies of thiamin monophosphate kinase in complex with substrates and products.</title>
        <authorList>
            <person name="McCulloch K.M."/>
            <person name="Kinsland C."/>
            <person name="Begley T.P."/>
            <person name="Ealick S.E."/>
        </authorList>
    </citation>
    <scope>X-RAY CRYSTALLOGRAPHY (1.48 ANGSTROMS) IN COMPLEXES WITH ATP; ADP; TMP; TPP AND MAGNESIUM</scope>
    <scope>FUNCTION</scope>
    <scope>DISULFIDE BOND</scope>
    <scope>SUBUNIT</scope>
    <scope>REACTION MECHANISM</scope>
</reference>
<reference key="3">
    <citation type="submission" date="2009-02" db="PDB data bank">
        <title>Crystal structure of thiamine monophosphate kinase (ThiL) from Aquifex Aeolicus.</title>
        <authorList>
            <consortium name="New York structural genomics research consortium (NYSGRC)"/>
        </authorList>
    </citation>
    <scope>X-RAY CRYSTALLOGRAPHY (2.65 ANGSTROMS)</scope>
</reference>
<sequence length="306" mass="34413">MRLKELGEFGLIDLIKKTLESKVIGDDTAPVEYCSKKLLLTTDVLNEGVHFLRSYIPEAVGWKAISVNVSDVIANGGLPKWALISLNLPEDLEVSYVERFYIGVKRACEFYKCEVVGGNISKSEKIGISVFLVGETERFVGRDGARLGDSVFVSGTLGDSRAGLELLLMEKEEYEPFELALIQRHLRPTARIDYVKHIQKYANASMDISDGLVADANHLAQRSGVKIEILSEKLPLSNELKMYCEKYGKNPIEYALFGGEDYQLLFTHPKERWNPFLDMTEIGRVEEGEGVFVDGKKVEPKGWKHF</sequence>
<protein>
    <recommendedName>
        <fullName evidence="1">Thiamine-monophosphate kinase</fullName>
        <shortName evidence="1">TMP kinase</shortName>
        <shortName evidence="1">Thiamine-phosphate kinase</shortName>
        <ecNumber evidence="1">2.7.4.16</ecNumber>
    </recommendedName>
</protein>
<comment type="function">
    <text evidence="1 3">Catalyzes the ATP-dependent phosphorylation of thiamine-monophosphate (TMP) to form thiamine-pyrophosphate (TPP), the active form of vitamin B1.</text>
</comment>
<comment type="catalytic activity">
    <reaction evidence="1">
        <text>thiamine phosphate + ATP = thiamine diphosphate + ADP</text>
        <dbReference type="Rhea" id="RHEA:15913"/>
        <dbReference type="ChEBI" id="CHEBI:30616"/>
        <dbReference type="ChEBI" id="CHEBI:37575"/>
        <dbReference type="ChEBI" id="CHEBI:58937"/>
        <dbReference type="ChEBI" id="CHEBI:456216"/>
        <dbReference type="EC" id="2.7.4.16"/>
    </reaction>
</comment>
<comment type="pathway">
    <text evidence="1">Cofactor biosynthesis; thiamine diphosphate biosynthesis; thiamine diphosphate from thiamine phosphate: step 1/1.</text>
</comment>
<comment type="subunit">
    <text evidence="2">Homodimer.</text>
</comment>
<comment type="miscellaneous">
    <text evidence="3">Reaction mechanism of ThiL seems to utilize a direct, inline transfer of the gamma-phosphate of ATP to TMP rather than a phosphorylated enzyme intermediate.</text>
</comment>
<comment type="similarity">
    <text evidence="1">Belongs to the thiamine-monophosphate kinase family.</text>
</comment>
<dbReference type="EC" id="2.7.4.16" evidence="1"/>
<dbReference type="EMBL" id="AE000657">
    <property type="protein sequence ID" value="AAC07848.1"/>
    <property type="molecule type" value="Genomic_DNA"/>
</dbReference>
<dbReference type="PIR" id="G70481">
    <property type="entry name" value="G70481"/>
</dbReference>
<dbReference type="RefSeq" id="NP_214452.1">
    <property type="nucleotide sequence ID" value="NC_000918.1"/>
</dbReference>
<dbReference type="RefSeq" id="WP_010881388.1">
    <property type="nucleotide sequence ID" value="NC_000918.1"/>
</dbReference>
<dbReference type="PDB" id="1VQV">
    <property type="method" value="X-ray"/>
    <property type="resolution" value="2.65 A"/>
    <property type="chains" value="A/B=1-306"/>
</dbReference>
<dbReference type="PDB" id="3C9R">
    <property type="method" value="X-ray"/>
    <property type="resolution" value="2.30 A"/>
    <property type="chains" value="A/B=1-306"/>
</dbReference>
<dbReference type="PDB" id="3C9S">
    <property type="method" value="X-ray"/>
    <property type="resolution" value="2.20 A"/>
    <property type="chains" value="A/B=1-306"/>
</dbReference>
<dbReference type="PDB" id="3C9T">
    <property type="method" value="X-ray"/>
    <property type="resolution" value="2.60 A"/>
    <property type="chains" value="A/B=1-306"/>
</dbReference>
<dbReference type="PDB" id="3C9U">
    <property type="method" value="X-ray"/>
    <property type="resolution" value="1.48 A"/>
    <property type="chains" value="A/B=1-306"/>
</dbReference>
<dbReference type="PDBsum" id="1VQV"/>
<dbReference type="PDBsum" id="3C9R"/>
<dbReference type="PDBsum" id="3C9S"/>
<dbReference type="PDBsum" id="3C9T"/>
<dbReference type="PDBsum" id="3C9U"/>
<dbReference type="SMR" id="O67883"/>
<dbReference type="FunCoup" id="O67883">
    <property type="interactions" value="319"/>
</dbReference>
<dbReference type="STRING" id="224324.aq_2119"/>
<dbReference type="EnsemblBacteria" id="AAC07848">
    <property type="protein sequence ID" value="AAC07848"/>
    <property type="gene ID" value="aq_2119"/>
</dbReference>
<dbReference type="KEGG" id="aae:aq_2119"/>
<dbReference type="PATRIC" id="fig|224324.8.peg.1635"/>
<dbReference type="eggNOG" id="COG0611">
    <property type="taxonomic scope" value="Bacteria"/>
</dbReference>
<dbReference type="HOGENOM" id="CLU_046964_1_1_0"/>
<dbReference type="InParanoid" id="O67883"/>
<dbReference type="OrthoDB" id="9802811at2"/>
<dbReference type="BRENDA" id="2.7.4.16">
    <property type="organism ID" value="396"/>
</dbReference>
<dbReference type="UniPathway" id="UPA00060">
    <property type="reaction ID" value="UER00142"/>
</dbReference>
<dbReference type="EvolutionaryTrace" id="O67883"/>
<dbReference type="Proteomes" id="UP000000798">
    <property type="component" value="Chromosome"/>
</dbReference>
<dbReference type="GO" id="GO:0005524">
    <property type="term" value="F:ATP binding"/>
    <property type="evidence" value="ECO:0007669"/>
    <property type="project" value="UniProtKB-UniRule"/>
</dbReference>
<dbReference type="GO" id="GO:0000287">
    <property type="term" value="F:magnesium ion binding"/>
    <property type="evidence" value="ECO:0007669"/>
    <property type="project" value="UniProtKB-UniRule"/>
</dbReference>
<dbReference type="GO" id="GO:0009030">
    <property type="term" value="F:thiamine-phosphate kinase activity"/>
    <property type="evidence" value="ECO:0000318"/>
    <property type="project" value="GO_Central"/>
</dbReference>
<dbReference type="GO" id="GO:0009228">
    <property type="term" value="P:thiamine biosynthetic process"/>
    <property type="evidence" value="ECO:0000318"/>
    <property type="project" value="GO_Central"/>
</dbReference>
<dbReference type="GO" id="GO:0009229">
    <property type="term" value="P:thiamine diphosphate biosynthetic process"/>
    <property type="evidence" value="ECO:0000318"/>
    <property type="project" value="GO_Central"/>
</dbReference>
<dbReference type="CDD" id="cd02194">
    <property type="entry name" value="ThiL"/>
    <property type="match status" value="1"/>
</dbReference>
<dbReference type="Gene3D" id="3.90.650.10">
    <property type="entry name" value="PurM-like C-terminal domain"/>
    <property type="match status" value="1"/>
</dbReference>
<dbReference type="Gene3D" id="3.30.1330.10">
    <property type="entry name" value="PurM-like, N-terminal domain"/>
    <property type="match status" value="1"/>
</dbReference>
<dbReference type="HAMAP" id="MF_02128">
    <property type="entry name" value="TMP_kinase"/>
    <property type="match status" value="1"/>
</dbReference>
<dbReference type="InterPro" id="IPR036676">
    <property type="entry name" value="PurM-like_C_sf"/>
</dbReference>
<dbReference type="InterPro" id="IPR016188">
    <property type="entry name" value="PurM-like_N"/>
</dbReference>
<dbReference type="InterPro" id="IPR036921">
    <property type="entry name" value="PurM-like_N_sf"/>
</dbReference>
<dbReference type="InterPro" id="IPR006283">
    <property type="entry name" value="ThiL-like"/>
</dbReference>
<dbReference type="NCBIfam" id="TIGR01379">
    <property type="entry name" value="thiL"/>
    <property type="match status" value="1"/>
</dbReference>
<dbReference type="PANTHER" id="PTHR30270">
    <property type="entry name" value="THIAMINE-MONOPHOSPHATE KINASE"/>
    <property type="match status" value="1"/>
</dbReference>
<dbReference type="PANTHER" id="PTHR30270:SF0">
    <property type="entry name" value="THIAMINE-MONOPHOSPHATE KINASE"/>
    <property type="match status" value="1"/>
</dbReference>
<dbReference type="Pfam" id="PF00586">
    <property type="entry name" value="AIRS"/>
    <property type="match status" value="1"/>
</dbReference>
<dbReference type="PIRSF" id="PIRSF005303">
    <property type="entry name" value="Thiam_monoph_kin"/>
    <property type="match status" value="1"/>
</dbReference>
<dbReference type="SUPFAM" id="SSF56042">
    <property type="entry name" value="PurM C-terminal domain-like"/>
    <property type="match status" value="1"/>
</dbReference>
<dbReference type="SUPFAM" id="SSF55326">
    <property type="entry name" value="PurM N-terminal domain-like"/>
    <property type="match status" value="1"/>
</dbReference>
<organism>
    <name type="scientific">Aquifex aeolicus (strain VF5)</name>
    <dbReference type="NCBI Taxonomy" id="224324"/>
    <lineage>
        <taxon>Bacteria</taxon>
        <taxon>Pseudomonadati</taxon>
        <taxon>Aquificota</taxon>
        <taxon>Aquificia</taxon>
        <taxon>Aquificales</taxon>
        <taxon>Aquificaceae</taxon>
        <taxon>Aquifex</taxon>
    </lineage>
</organism>
<name>THIL_AQUAE</name>
<proteinExistence type="evidence at protein level"/>
<gene>
    <name type="primary">thiL</name>
    <name type="ordered locus">aq_2119</name>
</gene>
<evidence type="ECO:0000255" key="1">
    <source>
        <dbReference type="HAMAP-Rule" id="MF_02128"/>
    </source>
</evidence>
<evidence type="ECO:0000269" key="2">
    <source>
    </source>
</evidence>
<evidence type="ECO:0000305" key="3">
    <source>
    </source>
</evidence>
<evidence type="ECO:0007829" key="4">
    <source>
        <dbReference type="PDB" id="3C9T"/>
    </source>
</evidence>
<evidence type="ECO:0007829" key="5">
    <source>
        <dbReference type="PDB" id="3C9U"/>
    </source>
</evidence>